<evidence type="ECO:0000269" key="1">
    <source>
    </source>
</evidence>
<evidence type="ECO:0000303" key="2">
    <source>
    </source>
</evidence>
<evidence type="ECO:0000305" key="3"/>
<evidence type="ECO:0000305" key="4">
    <source>
    </source>
</evidence>
<proteinExistence type="inferred from homology"/>
<keyword id="KW-1035">Host cytoplasm</keyword>
<keyword id="KW-1048">Host nucleus</keyword>
<keyword id="KW-0964">Secreted</keyword>
<keyword id="KW-0732">Signal</keyword>
<keyword id="KW-0843">Virulence</keyword>
<comment type="function">
    <text evidence="1">Secreted effector that completely suppresses the host cell death induced by cell death-inducing proteins.</text>
</comment>
<comment type="subcellular location">
    <subcellularLocation>
        <location evidence="1">Secreted</location>
    </subcellularLocation>
    <subcellularLocation>
        <location evidence="1">Host nucleus</location>
    </subcellularLocation>
    <subcellularLocation>
        <location evidence="1">Host cytoplasm</location>
    </subcellularLocation>
</comment>
<comment type="domain">
    <text evidence="4">The RxLR-dEER motif acts to carry the protein into the host cell cytoplasm through binding to cell surface phosphatidylinositol-3-phosphate.</text>
</comment>
<comment type="similarity">
    <text evidence="3">Belongs to the RxLR effector family.</text>
</comment>
<protein>
    <recommendedName>
        <fullName evidence="2">Secreted RxLR effector protein 94</fullName>
    </recommendedName>
</protein>
<sequence length="99" mass="11636">MAQLHRWDFWCFSTKPLGYLDVVQAIEAEVYDAWRQLRQSANPSKAWHQWKSETRKLFQDLDKKLRGQQEAVVHVAHATFTVAEMQYRQCGGEASHIVF</sequence>
<organism>
    <name type="scientific">Plasmopara viticola</name>
    <name type="common">Downy mildew of grapevine</name>
    <name type="synonym">Botrytis viticola</name>
    <dbReference type="NCBI Taxonomy" id="143451"/>
    <lineage>
        <taxon>Eukaryota</taxon>
        <taxon>Sar</taxon>
        <taxon>Stramenopiles</taxon>
        <taxon>Oomycota</taxon>
        <taxon>Peronosporales</taxon>
        <taxon>Peronosporaceae</taxon>
        <taxon>Plasmopara</taxon>
    </lineage>
</organism>
<dbReference type="SMR" id="P0CV35"/>
<dbReference type="GO" id="GO:0005576">
    <property type="term" value="C:extracellular region"/>
    <property type="evidence" value="ECO:0007669"/>
    <property type="project" value="UniProtKB-SubCell"/>
</dbReference>
<dbReference type="GO" id="GO:0030430">
    <property type="term" value="C:host cell cytoplasm"/>
    <property type="evidence" value="ECO:0007669"/>
    <property type="project" value="UniProtKB-SubCell"/>
</dbReference>
<dbReference type="GO" id="GO:0042025">
    <property type="term" value="C:host cell nucleus"/>
    <property type="evidence" value="ECO:0007669"/>
    <property type="project" value="UniProtKB-SubCell"/>
</dbReference>
<accession>P0CV35</accession>
<reference key="1">
    <citation type="journal article" date="2018" name="Front. Plant Sci.">
        <title>In planta functional analysis and subcellular localization of the oomycete pathogen Plasmopara viticola candidate RXLR effector repertoire.</title>
        <authorList>
            <person name="Liu Y."/>
            <person name="Lan X."/>
            <person name="Song S."/>
            <person name="Yin L."/>
            <person name="Dry I.B."/>
            <person name="Qu J."/>
            <person name="Xiang J."/>
            <person name="Lu J."/>
        </authorList>
    </citation>
    <scope>NUCLEOTIDE SEQUENCE [MRNA]</scope>
    <scope>DOMAIN</scope>
    <scope>FUNCTION</scope>
    <scope>SUBCELLULAR LOCATION</scope>
</reference>
<feature type="signal peptide" evidence="3">
    <location>
        <begin position="1"/>
        <end status="unknown"/>
    </location>
</feature>
<feature type="chain" id="PRO_0000447945" description="Secreted RxLR effector protein 94">
    <location>
        <begin status="unknown"/>
        <end position="99"/>
    </location>
</feature>
<feature type="short sequence motif" description="RxLR-dEER" evidence="4">
    <location>
        <begin position="35"/>
        <end position="55"/>
    </location>
</feature>
<name>RLR94_PLAVT</name>
<gene>
    <name evidence="2" type="primary">RXLR94</name>
</gene>